<organism>
    <name type="scientific">Chloroflexus aggregans (strain MD-66 / DSM 9485)</name>
    <dbReference type="NCBI Taxonomy" id="326427"/>
    <lineage>
        <taxon>Bacteria</taxon>
        <taxon>Bacillati</taxon>
        <taxon>Chloroflexota</taxon>
        <taxon>Chloroflexia</taxon>
        <taxon>Chloroflexales</taxon>
        <taxon>Chloroflexineae</taxon>
        <taxon>Chloroflexaceae</taxon>
        <taxon>Chloroflexus</taxon>
    </lineage>
</organism>
<evidence type="ECO:0000255" key="1">
    <source>
        <dbReference type="HAMAP-Rule" id="MF_00182"/>
    </source>
</evidence>
<protein>
    <recommendedName>
        <fullName evidence="1">Methionyl-tRNA formyltransferase</fullName>
        <ecNumber evidence="1">2.1.2.9</ecNumber>
    </recommendedName>
</protein>
<comment type="function">
    <text evidence="1">Attaches a formyl group to the free amino group of methionyl-tRNA(fMet). The formyl group appears to play a dual role in the initiator identity of N-formylmethionyl-tRNA by promoting its recognition by IF2 and preventing the misappropriation of this tRNA by the elongation apparatus.</text>
</comment>
<comment type="catalytic activity">
    <reaction evidence="1">
        <text>L-methionyl-tRNA(fMet) + (6R)-10-formyltetrahydrofolate = N-formyl-L-methionyl-tRNA(fMet) + (6S)-5,6,7,8-tetrahydrofolate + H(+)</text>
        <dbReference type="Rhea" id="RHEA:24380"/>
        <dbReference type="Rhea" id="RHEA-COMP:9952"/>
        <dbReference type="Rhea" id="RHEA-COMP:9953"/>
        <dbReference type="ChEBI" id="CHEBI:15378"/>
        <dbReference type="ChEBI" id="CHEBI:57453"/>
        <dbReference type="ChEBI" id="CHEBI:78530"/>
        <dbReference type="ChEBI" id="CHEBI:78844"/>
        <dbReference type="ChEBI" id="CHEBI:195366"/>
        <dbReference type="EC" id="2.1.2.9"/>
    </reaction>
</comment>
<comment type="similarity">
    <text evidence="1">Belongs to the Fmt family.</text>
</comment>
<feature type="chain" id="PRO_1000190015" description="Methionyl-tRNA formyltransferase">
    <location>
        <begin position="1"/>
        <end position="309"/>
    </location>
</feature>
<feature type="binding site" evidence="1">
    <location>
        <begin position="109"/>
        <end position="112"/>
    </location>
    <ligand>
        <name>(6S)-5,6,7,8-tetrahydrofolate</name>
        <dbReference type="ChEBI" id="CHEBI:57453"/>
    </ligand>
</feature>
<proteinExistence type="inferred from homology"/>
<accession>B8G4D0</accession>
<sequence length="309" mass="33137">MRIIFLGSPSYAVHALDALVAAGYTIVGVVTQPDRPAGRDRRLTPPPVKVAALAHGLPVLQPETLRDPEVVETLRALQPDVGVVAAYGEILRRAVLEIPPLGYLNIHPSLLPLYRGPTPVAGAILAGETVTGVTIMRLDPGMDSGPILAQAMVDLPPNARTGPLTDELFRLGATLLVEVLPRYARGEIELRPQDHSQATVTKMLKKEDGRIDWTLPAIVIERMTRAYDPWPSAYTFWRGQMLRIMSAAVAPTDASATPGMVIGRSAHGHPLVQTGSDALELVEVQPASRRPMSGAAWLAGVHAPEITLG</sequence>
<keyword id="KW-0648">Protein biosynthesis</keyword>
<keyword id="KW-0808">Transferase</keyword>
<reference key="1">
    <citation type="submission" date="2008-12" db="EMBL/GenBank/DDBJ databases">
        <title>Complete sequence of Chloroflexus aggregans DSM 9485.</title>
        <authorList>
            <consortium name="US DOE Joint Genome Institute"/>
            <person name="Lucas S."/>
            <person name="Copeland A."/>
            <person name="Lapidus A."/>
            <person name="Glavina del Rio T."/>
            <person name="Dalin E."/>
            <person name="Tice H."/>
            <person name="Pitluck S."/>
            <person name="Foster B."/>
            <person name="Larimer F."/>
            <person name="Land M."/>
            <person name="Hauser L."/>
            <person name="Kyrpides N."/>
            <person name="Mikhailova N."/>
            <person name="Bryant D.A."/>
            <person name="Richardson P."/>
        </authorList>
    </citation>
    <scope>NUCLEOTIDE SEQUENCE [LARGE SCALE GENOMIC DNA]</scope>
    <source>
        <strain>MD-66 / DSM 9485</strain>
    </source>
</reference>
<name>FMT_CHLAD</name>
<gene>
    <name evidence="1" type="primary">fmt</name>
    <name type="ordered locus">Cagg_0597</name>
</gene>
<dbReference type="EC" id="2.1.2.9" evidence="1"/>
<dbReference type="EMBL" id="CP001337">
    <property type="protein sequence ID" value="ACL23536.1"/>
    <property type="molecule type" value="Genomic_DNA"/>
</dbReference>
<dbReference type="RefSeq" id="WP_012615902.1">
    <property type="nucleotide sequence ID" value="NC_011831.1"/>
</dbReference>
<dbReference type="SMR" id="B8G4D0"/>
<dbReference type="STRING" id="326427.Cagg_0597"/>
<dbReference type="KEGG" id="cag:Cagg_0597"/>
<dbReference type="eggNOG" id="COG0223">
    <property type="taxonomic scope" value="Bacteria"/>
</dbReference>
<dbReference type="HOGENOM" id="CLU_033347_1_1_0"/>
<dbReference type="OrthoDB" id="9802815at2"/>
<dbReference type="Proteomes" id="UP000002508">
    <property type="component" value="Chromosome"/>
</dbReference>
<dbReference type="GO" id="GO:0005829">
    <property type="term" value="C:cytosol"/>
    <property type="evidence" value="ECO:0007669"/>
    <property type="project" value="TreeGrafter"/>
</dbReference>
<dbReference type="GO" id="GO:0004479">
    <property type="term" value="F:methionyl-tRNA formyltransferase activity"/>
    <property type="evidence" value="ECO:0007669"/>
    <property type="project" value="UniProtKB-UniRule"/>
</dbReference>
<dbReference type="CDD" id="cd08646">
    <property type="entry name" value="FMT_core_Met-tRNA-FMT_N"/>
    <property type="match status" value="1"/>
</dbReference>
<dbReference type="CDD" id="cd08704">
    <property type="entry name" value="Met_tRNA_FMT_C"/>
    <property type="match status" value="1"/>
</dbReference>
<dbReference type="Gene3D" id="3.40.50.12230">
    <property type="match status" value="1"/>
</dbReference>
<dbReference type="HAMAP" id="MF_00182">
    <property type="entry name" value="Formyl_trans"/>
    <property type="match status" value="1"/>
</dbReference>
<dbReference type="InterPro" id="IPR005794">
    <property type="entry name" value="Fmt"/>
</dbReference>
<dbReference type="InterPro" id="IPR005793">
    <property type="entry name" value="Formyl_trans_C"/>
</dbReference>
<dbReference type="InterPro" id="IPR002376">
    <property type="entry name" value="Formyl_transf_N"/>
</dbReference>
<dbReference type="InterPro" id="IPR036477">
    <property type="entry name" value="Formyl_transf_N_sf"/>
</dbReference>
<dbReference type="InterPro" id="IPR011034">
    <property type="entry name" value="Formyl_transferase-like_C_sf"/>
</dbReference>
<dbReference type="InterPro" id="IPR044135">
    <property type="entry name" value="Met-tRNA-FMT_C"/>
</dbReference>
<dbReference type="InterPro" id="IPR041711">
    <property type="entry name" value="Met-tRNA-FMT_N"/>
</dbReference>
<dbReference type="NCBIfam" id="TIGR00460">
    <property type="entry name" value="fmt"/>
    <property type="match status" value="1"/>
</dbReference>
<dbReference type="PANTHER" id="PTHR11138">
    <property type="entry name" value="METHIONYL-TRNA FORMYLTRANSFERASE"/>
    <property type="match status" value="1"/>
</dbReference>
<dbReference type="PANTHER" id="PTHR11138:SF5">
    <property type="entry name" value="METHIONYL-TRNA FORMYLTRANSFERASE, MITOCHONDRIAL"/>
    <property type="match status" value="1"/>
</dbReference>
<dbReference type="Pfam" id="PF02911">
    <property type="entry name" value="Formyl_trans_C"/>
    <property type="match status" value="1"/>
</dbReference>
<dbReference type="Pfam" id="PF00551">
    <property type="entry name" value="Formyl_trans_N"/>
    <property type="match status" value="1"/>
</dbReference>
<dbReference type="SUPFAM" id="SSF50486">
    <property type="entry name" value="FMT C-terminal domain-like"/>
    <property type="match status" value="1"/>
</dbReference>
<dbReference type="SUPFAM" id="SSF53328">
    <property type="entry name" value="Formyltransferase"/>
    <property type="match status" value="1"/>
</dbReference>